<gene>
    <name type="primary">SRSF3</name>
    <name type="synonym">SFRS3</name>
    <name type="synonym">SRP20</name>
</gene>
<reference key="1">
    <citation type="journal article" date="1992" name="Genes Dev.">
        <title>SR proteins: a conserved family of pre-mRNA splicing factors.</title>
        <authorList>
            <person name="Zahler A.M."/>
            <person name="Lane W.S."/>
            <person name="Stolk J.A."/>
            <person name="Roth M.B."/>
        </authorList>
    </citation>
    <scope>NUCLEOTIDE SEQUENCE [MRNA] (ISOFORM 1)</scope>
    <scope>PROTEIN SEQUENCE OF 29-37 AND 54-64</scope>
</reference>
<reference key="2">
    <citation type="submission" date="1998-11" db="EMBL/GenBank/DDBJ databases">
        <title>Identification and characterization of novel full-length cDNAs differentially expressed in hematopoietic lineages.</title>
        <authorList>
            <person name="Liu W.L."/>
            <person name="Wang M."/>
            <person name="Tang D."/>
            <person name="Rodgers G."/>
        </authorList>
    </citation>
    <scope>NUCLEOTIDE SEQUENCE [MRNA] (ISOFORM 1)</scope>
</reference>
<reference key="3">
    <citation type="journal article" date="2004" name="Nat. Genet.">
        <title>Complete sequencing and characterization of 21,243 full-length human cDNAs.</title>
        <authorList>
            <person name="Ota T."/>
            <person name="Suzuki Y."/>
            <person name="Nishikawa T."/>
            <person name="Otsuki T."/>
            <person name="Sugiyama T."/>
            <person name="Irie R."/>
            <person name="Wakamatsu A."/>
            <person name="Hayashi K."/>
            <person name="Sato H."/>
            <person name="Nagai K."/>
            <person name="Kimura K."/>
            <person name="Makita H."/>
            <person name="Sekine M."/>
            <person name="Obayashi M."/>
            <person name="Nishi T."/>
            <person name="Shibahara T."/>
            <person name="Tanaka T."/>
            <person name="Ishii S."/>
            <person name="Yamamoto J."/>
            <person name="Saito K."/>
            <person name="Kawai Y."/>
            <person name="Isono Y."/>
            <person name="Nakamura Y."/>
            <person name="Nagahari K."/>
            <person name="Murakami K."/>
            <person name="Yasuda T."/>
            <person name="Iwayanagi T."/>
            <person name="Wagatsuma M."/>
            <person name="Shiratori A."/>
            <person name="Sudo H."/>
            <person name="Hosoiri T."/>
            <person name="Kaku Y."/>
            <person name="Kodaira H."/>
            <person name="Kondo H."/>
            <person name="Sugawara M."/>
            <person name="Takahashi M."/>
            <person name="Kanda K."/>
            <person name="Yokoi T."/>
            <person name="Furuya T."/>
            <person name="Kikkawa E."/>
            <person name="Omura Y."/>
            <person name="Abe K."/>
            <person name="Kamihara K."/>
            <person name="Katsuta N."/>
            <person name="Sato K."/>
            <person name="Tanikawa M."/>
            <person name="Yamazaki M."/>
            <person name="Ninomiya K."/>
            <person name="Ishibashi T."/>
            <person name="Yamashita H."/>
            <person name="Murakawa K."/>
            <person name="Fujimori K."/>
            <person name="Tanai H."/>
            <person name="Kimata M."/>
            <person name="Watanabe M."/>
            <person name="Hiraoka S."/>
            <person name="Chiba Y."/>
            <person name="Ishida S."/>
            <person name="Ono Y."/>
            <person name="Takiguchi S."/>
            <person name="Watanabe S."/>
            <person name="Yosida M."/>
            <person name="Hotuta T."/>
            <person name="Kusano J."/>
            <person name="Kanehori K."/>
            <person name="Takahashi-Fujii A."/>
            <person name="Hara H."/>
            <person name="Tanase T.-O."/>
            <person name="Nomura Y."/>
            <person name="Togiya S."/>
            <person name="Komai F."/>
            <person name="Hara R."/>
            <person name="Takeuchi K."/>
            <person name="Arita M."/>
            <person name="Imose N."/>
            <person name="Musashino K."/>
            <person name="Yuuki H."/>
            <person name="Oshima A."/>
            <person name="Sasaki N."/>
            <person name="Aotsuka S."/>
            <person name="Yoshikawa Y."/>
            <person name="Matsunawa H."/>
            <person name="Ichihara T."/>
            <person name="Shiohata N."/>
            <person name="Sano S."/>
            <person name="Moriya S."/>
            <person name="Momiyama H."/>
            <person name="Satoh N."/>
            <person name="Takami S."/>
            <person name="Terashima Y."/>
            <person name="Suzuki O."/>
            <person name="Nakagawa S."/>
            <person name="Senoh A."/>
            <person name="Mizoguchi H."/>
            <person name="Goto Y."/>
            <person name="Shimizu F."/>
            <person name="Wakebe H."/>
            <person name="Hishigaki H."/>
            <person name="Watanabe T."/>
            <person name="Sugiyama A."/>
            <person name="Takemoto M."/>
            <person name="Kawakami B."/>
            <person name="Yamazaki M."/>
            <person name="Watanabe K."/>
            <person name="Kumagai A."/>
            <person name="Itakura S."/>
            <person name="Fukuzumi Y."/>
            <person name="Fujimori Y."/>
            <person name="Komiyama M."/>
            <person name="Tashiro H."/>
            <person name="Tanigami A."/>
            <person name="Fujiwara T."/>
            <person name="Ono T."/>
            <person name="Yamada K."/>
            <person name="Fujii Y."/>
            <person name="Ozaki K."/>
            <person name="Hirao M."/>
            <person name="Ohmori Y."/>
            <person name="Kawabata A."/>
            <person name="Hikiji T."/>
            <person name="Kobatake N."/>
            <person name="Inagaki H."/>
            <person name="Ikema Y."/>
            <person name="Okamoto S."/>
            <person name="Okitani R."/>
            <person name="Kawakami T."/>
            <person name="Noguchi S."/>
            <person name="Itoh T."/>
            <person name="Shigeta K."/>
            <person name="Senba T."/>
            <person name="Matsumura K."/>
            <person name="Nakajima Y."/>
            <person name="Mizuno T."/>
            <person name="Morinaga M."/>
            <person name="Sasaki M."/>
            <person name="Togashi T."/>
            <person name="Oyama M."/>
            <person name="Hata H."/>
            <person name="Watanabe M."/>
            <person name="Komatsu T."/>
            <person name="Mizushima-Sugano J."/>
            <person name="Satoh T."/>
            <person name="Shirai Y."/>
            <person name="Takahashi Y."/>
            <person name="Nakagawa K."/>
            <person name="Okumura K."/>
            <person name="Nagase T."/>
            <person name="Nomura N."/>
            <person name="Kikuchi H."/>
            <person name="Masuho Y."/>
            <person name="Yamashita R."/>
            <person name="Nakai K."/>
            <person name="Yada T."/>
            <person name="Nakamura Y."/>
            <person name="Ohara O."/>
            <person name="Isogai T."/>
            <person name="Sugano S."/>
        </authorList>
    </citation>
    <scope>NUCLEOTIDE SEQUENCE [LARGE SCALE MRNA] (ISOFORM 2)</scope>
    <source>
        <tissue>Trachea</tissue>
    </source>
</reference>
<reference key="4">
    <citation type="submission" date="2004-10" db="EMBL/GenBank/DDBJ databases">
        <title>Cloning of human full-length CDSs in BD Creator(TM) system donor vector.</title>
        <authorList>
            <person name="Kalnine N."/>
            <person name="Chen X."/>
            <person name="Rolfs A."/>
            <person name="Halleck A."/>
            <person name="Hines L."/>
            <person name="Eisenstein S."/>
            <person name="Koundinya M."/>
            <person name="Raphael J."/>
            <person name="Moreira D."/>
            <person name="Kelley T."/>
            <person name="LaBaer J."/>
            <person name="Lin Y."/>
            <person name="Phelan M."/>
            <person name="Farmer A."/>
        </authorList>
    </citation>
    <scope>NUCLEOTIDE SEQUENCE [LARGE SCALE MRNA] (ISOFORM 1)</scope>
</reference>
<reference key="5">
    <citation type="journal article" date="2003" name="Nature">
        <title>The DNA sequence and analysis of human chromosome 6.</title>
        <authorList>
            <person name="Mungall A.J."/>
            <person name="Palmer S.A."/>
            <person name="Sims S.K."/>
            <person name="Edwards C.A."/>
            <person name="Ashurst J.L."/>
            <person name="Wilming L."/>
            <person name="Jones M.C."/>
            <person name="Horton R."/>
            <person name="Hunt S.E."/>
            <person name="Scott C.E."/>
            <person name="Gilbert J.G.R."/>
            <person name="Clamp M.E."/>
            <person name="Bethel G."/>
            <person name="Milne S."/>
            <person name="Ainscough R."/>
            <person name="Almeida J.P."/>
            <person name="Ambrose K.D."/>
            <person name="Andrews T.D."/>
            <person name="Ashwell R.I.S."/>
            <person name="Babbage A.K."/>
            <person name="Bagguley C.L."/>
            <person name="Bailey J."/>
            <person name="Banerjee R."/>
            <person name="Barker D.J."/>
            <person name="Barlow K.F."/>
            <person name="Bates K."/>
            <person name="Beare D.M."/>
            <person name="Beasley H."/>
            <person name="Beasley O."/>
            <person name="Bird C.P."/>
            <person name="Blakey S.E."/>
            <person name="Bray-Allen S."/>
            <person name="Brook J."/>
            <person name="Brown A.J."/>
            <person name="Brown J.Y."/>
            <person name="Burford D.C."/>
            <person name="Burrill W."/>
            <person name="Burton J."/>
            <person name="Carder C."/>
            <person name="Carter N.P."/>
            <person name="Chapman J.C."/>
            <person name="Clark S.Y."/>
            <person name="Clark G."/>
            <person name="Clee C.M."/>
            <person name="Clegg S."/>
            <person name="Cobley V."/>
            <person name="Collier R.E."/>
            <person name="Collins J.E."/>
            <person name="Colman L.K."/>
            <person name="Corby N.R."/>
            <person name="Coville G.J."/>
            <person name="Culley K.M."/>
            <person name="Dhami P."/>
            <person name="Davies J."/>
            <person name="Dunn M."/>
            <person name="Earthrowl M.E."/>
            <person name="Ellington A.E."/>
            <person name="Evans K.A."/>
            <person name="Faulkner L."/>
            <person name="Francis M.D."/>
            <person name="Frankish A."/>
            <person name="Frankland J."/>
            <person name="French L."/>
            <person name="Garner P."/>
            <person name="Garnett J."/>
            <person name="Ghori M.J."/>
            <person name="Gilby L.M."/>
            <person name="Gillson C.J."/>
            <person name="Glithero R.J."/>
            <person name="Grafham D.V."/>
            <person name="Grant M."/>
            <person name="Gribble S."/>
            <person name="Griffiths C."/>
            <person name="Griffiths M.N.D."/>
            <person name="Hall R."/>
            <person name="Halls K.S."/>
            <person name="Hammond S."/>
            <person name="Harley J.L."/>
            <person name="Hart E.A."/>
            <person name="Heath P.D."/>
            <person name="Heathcott R."/>
            <person name="Holmes S.J."/>
            <person name="Howden P.J."/>
            <person name="Howe K.L."/>
            <person name="Howell G.R."/>
            <person name="Huckle E."/>
            <person name="Humphray S.J."/>
            <person name="Humphries M.D."/>
            <person name="Hunt A.R."/>
            <person name="Johnson C.M."/>
            <person name="Joy A.A."/>
            <person name="Kay M."/>
            <person name="Keenan S.J."/>
            <person name="Kimberley A.M."/>
            <person name="King A."/>
            <person name="Laird G.K."/>
            <person name="Langford C."/>
            <person name="Lawlor S."/>
            <person name="Leongamornlert D.A."/>
            <person name="Leversha M."/>
            <person name="Lloyd C.R."/>
            <person name="Lloyd D.M."/>
            <person name="Loveland J.E."/>
            <person name="Lovell J."/>
            <person name="Martin S."/>
            <person name="Mashreghi-Mohammadi M."/>
            <person name="Maslen G.L."/>
            <person name="Matthews L."/>
            <person name="McCann O.T."/>
            <person name="McLaren S.J."/>
            <person name="McLay K."/>
            <person name="McMurray A."/>
            <person name="Moore M.J.F."/>
            <person name="Mullikin J.C."/>
            <person name="Niblett D."/>
            <person name="Nickerson T."/>
            <person name="Novik K.L."/>
            <person name="Oliver K."/>
            <person name="Overton-Larty E.K."/>
            <person name="Parker A."/>
            <person name="Patel R."/>
            <person name="Pearce A.V."/>
            <person name="Peck A.I."/>
            <person name="Phillimore B.J.C.T."/>
            <person name="Phillips S."/>
            <person name="Plumb R.W."/>
            <person name="Porter K.M."/>
            <person name="Ramsey Y."/>
            <person name="Ranby S.A."/>
            <person name="Rice C.M."/>
            <person name="Ross M.T."/>
            <person name="Searle S.M."/>
            <person name="Sehra H.K."/>
            <person name="Sheridan E."/>
            <person name="Skuce C.D."/>
            <person name="Smith S."/>
            <person name="Smith M."/>
            <person name="Spraggon L."/>
            <person name="Squares S.L."/>
            <person name="Steward C.A."/>
            <person name="Sycamore N."/>
            <person name="Tamlyn-Hall G."/>
            <person name="Tester J."/>
            <person name="Theaker A.J."/>
            <person name="Thomas D.W."/>
            <person name="Thorpe A."/>
            <person name="Tracey A."/>
            <person name="Tromans A."/>
            <person name="Tubby B."/>
            <person name="Wall M."/>
            <person name="Wallis J.M."/>
            <person name="West A.P."/>
            <person name="White S.S."/>
            <person name="Whitehead S.L."/>
            <person name="Whittaker H."/>
            <person name="Wild A."/>
            <person name="Willey D.J."/>
            <person name="Wilmer T.E."/>
            <person name="Wood J.M."/>
            <person name="Wray P.W."/>
            <person name="Wyatt J.C."/>
            <person name="Young L."/>
            <person name="Younger R.M."/>
            <person name="Bentley D.R."/>
            <person name="Coulson A."/>
            <person name="Durbin R.M."/>
            <person name="Hubbard T."/>
            <person name="Sulston J.E."/>
            <person name="Dunham I."/>
            <person name="Rogers J."/>
            <person name="Beck S."/>
        </authorList>
    </citation>
    <scope>NUCLEOTIDE SEQUENCE [LARGE SCALE GENOMIC DNA]</scope>
</reference>
<reference key="6">
    <citation type="submission" date="2005-07" db="EMBL/GenBank/DDBJ databases">
        <authorList>
            <person name="Mural R.J."/>
            <person name="Istrail S."/>
            <person name="Sutton G."/>
            <person name="Florea L."/>
            <person name="Halpern A.L."/>
            <person name="Mobarry C.M."/>
            <person name="Lippert R."/>
            <person name="Walenz B."/>
            <person name="Shatkay H."/>
            <person name="Dew I."/>
            <person name="Miller J.R."/>
            <person name="Flanigan M.J."/>
            <person name="Edwards N.J."/>
            <person name="Bolanos R."/>
            <person name="Fasulo D."/>
            <person name="Halldorsson B.V."/>
            <person name="Hannenhalli S."/>
            <person name="Turner R."/>
            <person name="Yooseph S."/>
            <person name="Lu F."/>
            <person name="Nusskern D.R."/>
            <person name="Shue B.C."/>
            <person name="Zheng X.H."/>
            <person name="Zhong F."/>
            <person name="Delcher A.L."/>
            <person name="Huson D.H."/>
            <person name="Kravitz S.A."/>
            <person name="Mouchard L."/>
            <person name="Reinert K."/>
            <person name="Remington K.A."/>
            <person name="Clark A.G."/>
            <person name="Waterman M.S."/>
            <person name="Eichler E.E."/>
            <person name="Adams M.D."/>
            <person name="Hunkapiller M.W."/>
            <person name="Myers E.W."/>
            <person name="Venter J.C."/>
        </authorList>
    </citation>
    <scope>NUCLEOTIDE SEQUENCE [LARGE SCALE GENOMIC DNA]</scope>
</reference>
<reference key="7">
    <citation type="journal article" date="2004" name="Genome Res.">
        <title>The status, quality, and expansion of the NIH full-length cDNA project: the Mammalian Gene Collection (MGC).</title>
        <authorList>
            <consortium name="The MGC Project Team"/>
        </authorList>
    </citation>
    <scope>NUCLEOTIDE SEQUENCE [LARGE SCALE MRNA] (ISOFORM 1)</scope>
    <source>
        <tissue>Brain</tissue>
        <tissue>Placenta</tissue>
    </source>
</reference>
<reference key="8">
    <citation type="journal article" date="2000" name="Mol. Cell. Biol.">
        <title>Identification and characterization of a novel serine-arginine-rich splicing regulatory protein.</title>
        <authorList>
            <person name="Barnard D.C."/>
            <person name="Patton J.G."/>
        </authorList>
    </citation>
    <scope>INTERACTION WITH SREK1</scope>
</reference>
<reference key="9">
    <citation type="journal article" date="2001" name="Mol. Cell">
        <title>Splicing factors SRp20 and 9G8 promote the nucleocytoplasmic export of mRNA.</title>
        <authorList>
            <person name="Huang Y."/>
            <person name="Steitz J.A."/>
        </authorList>
    </citation>
    <scope>FUNCTION IN MRNA EXPORT</scope>
    <scope>SUBCELLULAR LOCATION</scope>
</reference>
<reference key="10">
    <citation type="journal article" date="2003" name="Mol. Cell">
        <title>SR splicing factors serve as adapter proteins for TAP-dependent mRNA export.</title>
        <authorList>
            <person name="Huang Y."/>
            <person name="Gattoni R."/>
            <person name="Stevenin J."/>
            <person name="Steitz J.A."/>
        </authorList>
    </citation>
    <scope>INTERACTION WITH NXF1</scope>
    <scope>REGION</scope>
</reference>
<reference key="11">
    <citation type="journal article" date="2004" name="Int. J. Androl.">
        <title>The role of potential splicing factors including RBMY, RBMX, hnRNPG-T and STAR proteins in spermatogenesis.</title>
        <authorList>
            <person name="Elliott D.J."/>
        </authorList>
    </citation>
    <scope>INTERACTION WITH RBMY1A1</scope>
</reference>
<reference key="12">
    <citation type="journal article" date="2004" name="J. Biol. Chem.">
        <title>Distinct sequence motifs within the 68-kDa subunit of cleavage factor Im mediate RNA binding, protein-protein interactions, and subcellular localization.</title>
        <authorList>
            <person name="Dettwiler S."/>
            <person name="Aringhieri C."/>
            <person name="Cardinale S."/>
            <person name="Keller W."/>
            <person name="Barabino S.M."/>
        </authorList>
    </citation>
    <scope>INTERACTION WITH CPSF6</scope>
</reference>
<reference key="13">
    <citation type="journal article" date="2008" name="Proc. Natl. Acad. Sci. U.S.A.">
        <title>A quantitative atlas of mitotic phosphorylation.</title>
        <authorList>
            <person name="Dephoure N."/>
            <person name="Zhou C."/>
            <person name="Villen J."/>
            <person name="Beausoleil S.A."/>
            <person name="Bakalarski C.E."/>
            <person name="Elledge S.J."/>
            <person name="Gygi S.P."/>
        </authorList>
    </citation>
    <scope>IDENTIFICATION BY MASS SPECTROMETRY [LARGE SCALE ANALYSIS]</scope>
    <source>
        <tissue>Cervix carcinoma</tissue>
    </source>
</reference>
<reference key="14">
    <citation type="journal article" date="2008" name="Proc. Natl. Acad. Sci. U.S.A.">
        <title>Mutually exclusive interactions drive handover of mRNA from export adaptors to TAP.</title>
        <authorList>
            <person name="Hautbergue G.M."/>
            <person name="Hung M.L."/>
            <person name="Golovanov A.P."/>
            <person name="Lian L.Y."/>
            <person name="Wilson S.A."/>
        </authorList>
    </citation>
    <scope>FUNCTION IN MRNA EXPORT</scope>
</reference>
<reference key="15">
    <citation type="journal article" date="2009" name="Science">
        <title>Lysine acetylation targets protein complexes and co-regulates major cellular functions.</title>
        <authorList>
            <person name="Choudhary C."/>
            <person name="Kumar C."/>
            <person name="Gnad F."/>
            <person name="Nielsen M.L."/>
            <person name="Rehman M."/>
            <person name="Walther T.C."/>
            <person name="Olsen J.V."/>
            <person name="Mann M."/>
        </authorList>
    </citation>
    <scope>ACETYLATION [LARGE SCALE ANALYSIS] AT LYS-23</scope>
    <scope>IDENTIFICATION BY MASS SPECTROMETRY [LARGE SCALE ANALYSIS]</scope>
</reference>
<reference key="16">
    <citation type="journal article" date="2010" name="Sci. Signal.">
        <title>Quantitative phosphoproteomics reveals widespread full phosphorylation site occupancy during mitosis.</title>
        <authorList>
            <person name="Olsen J.V."/>
            <person name="Vermeulen M."/>
            <person name="Santamaria A."/>
            <person name="Kumar C."/>
            <person name="Miller M.L."/>
            <person name="Jensen L.J."/>
            <person name="Gnad F."/>
            <person name="Cox J."/>
            <person name="Jensen T.S."/>
            <person name="Nigg E.A."/>
            <person name="Brunak S."/>
            <person name="Mann M."/>
        </authorList>
    </citation>
    <scope>ACETYLATION [LARGE SCALE ANALYSIS] AT MET-1</scope>
    <scope>PHOSPHORYLATION [LARGE SCALE ANALYSIS] AT SER-5</scope>
    <scope>IDENTIFICATION BY MASS SPECTROMETRY [LARGE SCALE ANALYSIS]</scope>
    <source>
        <tissue>Cervix carcinoma</tissue>
    </source>
</reference>
<reference key="17">
    <citation type="journal article" date="2011" name="BMC Syst. Biol.">
        <title>Initial characterization of the human central proteome.</title>
        <authorList>
            <person name="Burkard T.R."/>
            <person name="Planyavsky M."/>
            <person name="Kaupe I."/>
            <person name="Breitwieser F.P."/>
            <person name="Buerckstuemmer T."/>
            <person name="Bennett K.L."/>
            <person name="Superti-Furga G."/>
            <person name="Colinge J."/>
        </authorList>
    </citation>
    <scope>IDENTIFICATION BY MASS SPECTROMETRY [LARGE SCALE ANALYSIS]</scope>
</reference>
<reference key="18">
    <citation type="journal article" date="2013" name="J. Proteome Res.">
        <title>Toward a comprehensive characterization of a human cancer cell phosphoproteome.</title>
        <authorList>
            <person name="Zhou H."/>
            <person name="Di Palma S."/>
            <person name="Preisinger C."/>
            <person name="Peng M."/>
            <person name="Polat A.N."/>
            <person name="Heck A.J."/>
            <person name="Mohammed S."/>
        </authorList>
    </citation>
    <scope>PHOSPHORYLATION [LARGE SCALE ANALYSIS] AT SER-5</scope>
    <scope>IDENTIFICATION BY MASS SPECTROMETRY [LARGE SCALE ANALYSIS]</scope>
    <source>
        <tissue>Erythroleukemia</tissue>
    </source>
</reference>
<reference key="19">
    <citation type="journal article" date="2015" name="Proteomics">
        <title>N-terminome analysis of the human mitochondrial proteome.</title>
        <authorList>
            <person name="Vaca Jacome A.S."/>
            <person name="Rabilloud T."/>
            <person name="Schaeffer-Reiss C."/>
            <person name="Rompais M."/>
            <person name="Ayoub D."/>
            <person name="Lane L."/>
            <person name="Bairoch A."/>
            <person name="Van Dorsselaer A."/>
            <person name="Carapito C."/>
        </authorList>
    </citation>
    <scope>IDENTIFICATION BY MASS SPECTROMETRY [LARGE SCALE ANALYSIS]</scope>
</reference>
<reference key="20">
    <citation type="journal article" date="2020" name="Adv. Sci.">
        <title>Small protein hidden in lncRNA LOC90024 promotes 'cancerous' RNA splicing and tumorigenesis.</title>
        <authorList>
            <person name="Meng N."/>
            <person name="Chen M."/>
            <person name="Chen D."/>
            <person name="Chen X.H."/>
            <person name="Wang J.Z."/>
            <person name="Zhu S."/>
            <person name="He Y.T."/>
            <person name="Zhang X.L."/>
            <person name="Lu R.X."/>
            <person name="Yan G.R."/>
        </authorList>
    </citation>
    <scope>FUNCTION</scope>
    <scope>INTERACTION WITH SRSP</scope>
    <scope>REGION</scope>
</reference>
<reference key="21">
    <citation type="journal article" date="2006" name="EMBO J.">
        <title>Molecular basis of RNA recognition and TAP binding by the SR proteins SRp20 and 9G8.</title>
        <authorList>
            <person name="Hargous Y."/>
            <person name="Hautbergue G.M."/>
            <person name="Tintaru A.M."/>
            <person name="Skrisovska L."/>
            <person name="Golovanov A.P."/>
            <person name="Stevenin J."/>
            <person name="Lian L.Y."/>
            <person name="Wilson S.A."/>
            <person name="Allain F.H."/>
        </authorList>
    </citation>
    <scope>STRUCTURE BY NMR OF 1-86</scope>
    <scope>RNA-BINDING</scope>
    <scope>FUNCTION</scope>
    <scope>INTERACTION WITH NXF1</scope>
    <scope>REGION</scope>
    <scope>MUTAGENESIS OF ARG-86; ARG-88 AND ARG-90</scope>
</reference>
<reference key="22">
    <citation type="journal article" date="2016" name="Mol. Cell">
        <title>Nuclear m(6)A reader YTHDC1 regulates mRNA splicing.</title>
        <authorList>
            <person name="Xiao W."/>
            <person name="Adhikari S."/>
            <person name="Dahal U."/>
            <person name="Chen Y.S."/>
            <person name="Hao Y.J."/>
            <person name="Sun B.F."/>
            <person name="Sun H.Y."/>
            <person name="Li A."/>
            <person name="Ping X.L."/>
            <person name="Lai W.Y."/>
            <person name="Wang X."/>
            <person name="Ma H.L."/>
            <person name="Huang C.M."/>
            <person name="Yang Y."/>
            <person name="Huang N."/>
            <person name="Jiang G.B."/>
            <person name="Wang H.L."/>
            <person name="Zhou Q."/>
            <person name="Wang X.J."/>
            <person name="Zhao Y.L."/>
            <person name="Yang Y.G."/>
        </authorList>
    </citation>
    <scope>FUNCTION</scope>
    <scope>SUBCELLULAR LOCATION</scope>
    <scope>INTERACTION WITH YTHDC1</scope>
</reference>
<reference key="23">
    <citation type="journal article" date="2017" name="Elife">
        <title>YTHDC1 mediates nuclear export of N6-methyladenosine methylated mRNAs.</title>
        <authorList>
            <person name="Roundtree I.A."/>
            <person name="Luo G.Z."/>
            <person name="Zhang Z."/>
            <person name="Wang X."/>
            <person name="Zhou T."/>
            <person name="Cui Y."/>
            <person name="Sha J."/>
            <person name="Huang X."/>
            <person name="Guerrero L."/>
            <person name="Xie P."/>
            <person name="He E."/>
            <person name="Shen B."/>
            <person name="He C."/>
        </authorList>
    </citation>
    <scope>FUNCTION</scope>
    <scope>INTERACTION WITH YTHDC1</scope>
</reference>
<organism>
    <name type="scientific">Homo sapiens</name>
    <name type="common">Human</name>
    <dbReference type="NCBI Taxonomy" id="9606"/>
    <lineage>
        <taxon>Eukaryota</taxon>
        <taxon>Metazoa</taxon>
        <taxon>Chordata</taxon>
        <taxon>Craniata</taxon>
        <taxon>Vertebrata</taxon>
        <taxon>Euteleostomi</taxon>
        <taxon>Mammalia</taxon>
        <taxon>Eutheria</taxon>
        <taxon>Euarchontoglires</taxon>
        <taxon>Primates</taxon>
        <taxon>Haplorrhini</taxon>
        <taxon>Catarrhini</taxon>
        <taxon>Hominidae</taxon>
        <taxon>Homo</taxon>
    </lineage>
</organism>
<protein>
    <recommendedName>
        <fullName>Serine/arginine-rich splicing factor 3</fullName>
    </recommendedName>
    <alternativeName>
        <fullName>Pre-mRNA-splicing factor SRP20</fullName>
    </alternativeName>
    <alternativeName>
        <fullName>Splicing factor, arginine/serine-rich 3</fullName>
    </alternativeName>
</protein>
<accession>P84103</accession>
<accession>B4E241</accession>
<accession>O08831</accession>
<accession>P23152</accession>
<accession>Q5R3K0</accession>
<comment type="function">
    <text evidence="5 9 10 11 12 13">Splicing factor, which binds the consensus motif 5'-C[ACU][AU]C[ACU][AC]C-3' within pre-mRNA and promotes specific exons inclusion during alternative splicing (PubMed:17036044, PubMed:26876937, PubMed:32440474). Interaction with YTHDC1, a RNA-binding protein that recognizes and binds N6-methyladenosine (m6A)-containing RNAs, promotes recruitment of SRSF3 to its mRNA-binding elements adjacent to m6A sites within exons (PubMed:26876937). Also functions as an adapter involved in mRNA nuclear export (PubMed:11336712, PubMed:18364396, PubMed:28984244). Binds mRNA which is thought to be transferred to the NXF1-NXT1 heterodimer for export (TAP/NXF1 pathway); enhances NXF1-NXT1 RNA-binding activity (PubMed:11336712, PubMed:18364396). Involved in nuclear export of m6A-containing mRNAs via interaction with YTHDC1: interaction with YTHDC1 facilitates m6A-containing mRNA-binding to both SRSF3 and NXF1, promoting mRNA nuclear export (PubMed:28984244).</text>
</comment>
<comment type="subunit">
    <text evidence="4 6 7 8 9 11 12 13">Interacts with CPSF6 (PubMed:15169763). Interacts with RBMY1A1 (PubMed:15595951). Interacts with SREK1/SFRS12 (PubMed:10757789). Interacts with NXF1 (PubMed:12667464, PubMed:17036044). Interacts with YTHDC1, leading to recruitment to RNA elements adjacent to m6A sites (PubMed:26876937, PubMed:28984244). Interacts with SRSP; increases SRSF3 binding to specific exons (PubMed:32440474).</text>
</comment>
<comment type="interaction">
    <interactant intactId="EBI-372557">
        <id>P84103</id>
    </interactant>
    <interactant intactId="EBI-538850">
        <id>Q14011</id>
        <label>CIRBP</label>
    </interactant>
    <organismsDiffer>false</organismsDiffer>
    <experiments>3</experiments>
</comment>
<comment type="interaction">
    <interactant intactId="EBI-372557">
        <id>P84103</id>
    </interactant>
    <interactant intactId="EBI-11981867">
        <id>P49759-3</id>
        <label>CLK1</label>
    </interactant>
    <organismsDiffer>false</organismsDiffer>
    <experiments>3</experiments>
</comment>
<comment type="interaction">
    <interactant intactId="EBI-372557">
        <id>P84103</id>
    </interactant>
    <interactant intactId="EBI-750020">
        <id>P49760</id>
        <label>CLK2</label>
    </interactant>
    <organismsDiffer>false</organismsDiffer>
    <experiments>4</experiments>
</comment>
<comment type="interaction">
    <interactant intactId="EBI-372557">
        <id>P84103</id>
    </interactant>
    <interactant intactId="EBI-745579">
        <id>P49761</id>
        <label>CLK3</label>
    </interactant>
    <organismsDiffer>false</organismsDiffer>
    <experiments>4</experiments>
</comment>
<comment type="interaction">
    <interactant intactId="EBI-372557">
        <id>P84103</id>
    </interactant>
    <interactant intactId="EBI-741032">
        <id>Q8NE01</id>
        <label>CNNM3</label>
    </interactant>
    <organismsDiffer>false</organismsDiffer>
    <experiments>3</experiments>
</comment>
<comment type="interaction">
    <interactant intactId="EBI-372557">
        <id>P84103</id>
    </interactant>
    <interactant intactId="EBI-389432">
        <id>P09429</id>
        <label>HMGB1</label>
    </interactant>
    <organismsDiffer>false</organismsDiffer>
    <experiments>3</experiments>
</comment>
<comment type="interaction">
    <interactant intactId="EBI-372557">
        <id>P84103</id>
    </interactant>
    <interactant intactId="EBI-7060731">
        <id>P61978-2</id>
        <label>HNRNPK</label>
    </interactant>
    <organismsDiffer>false</organismsDiffer>
    <experiments>3</experiments>
</comment>
<comment type="interaction">
    <interactant intactId="EBI-372557">
        <id>P84103</id>
    </interactant>
    <interactant intactId="EBI-739832">
        <id>Q8TBB1</id>
        <label>LNX1</label>
    </interactant>
    <organismsDiffer>false</organismsDiffer>
    <experiments>3</experiments>
</comment>
<comment type="interaction">
    <interactant intactId="EBI-372557">
        <id>P84103</id>
    </interactant>
    <interactant intactId="EBI-398874">
        <id>Q9UBU9</id>
        <label>NXF1</label>
    </interactant>
    <organismsDiffer>false</organismsDiffer>
    <experiments>4</experiments>
</comment>
<comment type="interaction">
    <interactant intactId="EBI-372557">
        <id>P84103</id>
    </interactant>
    <interactant intactId="EBI-945799">
        <id>Q15366</id>
        <label>PCBP2</label>
    </interactant>
    <organismsDiffer>false</organismsDiffer>
    <experiments>3</experiments>
</comment>
<comment type="interaction">
    <interactant intactId="EBI-372557">
        <id>P84103</id>
    </interactant>
    <interactant intactId="EBI-11983983">
        <id>P57721-2</id>
        <label>PCBP3</label>
    </interactant>
    <organismsDiffer>false</organismsDiffer>
    <experiments>3</experiments>
</comment>
<comment type="interaction">
    <interactant intactId="EBI-372557">
        <id>P84103</id>
    </interactant>
    <interactant intactId="EBI-10329013">
        <id>Q9Y5E9</id>
        <label>PCDHB14</label>
    </interactant>
    <organismsDiffer>false</organismsDiffer>
    <experiments>3</experiments>
</comment>
<comment type="interaction">
    <interactant intactId="EBI-372557">
        <id>P84103</id>
    </interactant>
    <interactant intactId="EBI-1567797">
        <id>Q8WWY3</id>
        <label>PRPF31</label>
    </interactant>
    <organismsDiffer>false</organismsDiffer>
    <experiments>3</experiments>
</comment>
<comment type="interaction">
    <interactant intactId="EBI-372557">
        <id>P84103</id>
    </interactant>
    <interactant intactId="EBI-2949699">
        <id>P98179</id>
        <label>RBM3</label>
    </interactant>
    <organismsDiffer>false</organismsDiffer>
    <experiments>3</experiments>
</comment>
<comment type="interaction">
    <interactant intactId="EBI-372557">
        <id>P84103</id>
    </interactant>
    <interactant intactId="EBI-743526">
        <id>P38159</id>
        <label>RBMX</label>
    </interactant>
    <organismsDiffer>false</organismsDiffer>
    <experiments>3</experiments>
</comment>
<comment type="interaction">
    <interactant intactId="EBI-372557">
        <id>P84103</id>
    </interactant>
    <interactant intactId="EBI-395959">
        <id>Q15287</id>
        <label>RNPS1</label>
    </interactant>
    <organismsDiffer>false</organismsDiffer>
    <experiments>3</experiments>
</comment>
<comment type="interaction">
    <interactant intactId="EBI-372557">
        <id>P84103</id>
    </interactant>
    <interactant intactId="EBI-358122">
        <id>P32969</id>
        <label>RPL9P9</label>
    </interactant>
    <organismsDiffer>false</organismsDiffer>
    <experiments>3</experiments>
</comment>
<comment type="interaction">
    <interactant intactId="EBI-372557">
        <id>P84103</id>
    </interactant>
    <interactant intactId="EBI-727004">
        <id>O00560</id>
        <label>SDCBP</label>
    </interactant>
    <organismsDiffer>false</organismsDiffer>
    <experiments>3</experiments>
</comment>
<comment type="interaction">
    <interactant intactId="EBI-372557">
        <id>P84103</id>
    </interactant>
    <interactant intactId="EBI-539478">
        <id>Q96SB4</id>
        <label>SRPK1</label>
    </interactant>
    <organismsDiffer>false</organismsDiffer>
    <experiments>2</experiments>
</comment>
<comment type="interaction">
    <interactant intactId="EBI-372557">
        <id>P84103</id>
    </interactant>
    <interactant intactId="EBI-593303">
        <id>P78362</id>
        <label>SRPK2</label>
    </interactant>
    <organismsDiffer>false</organismsDiffer>
    <experiments>2</experiments>
</comment>
<comment type="interaction">
    <interactant intactId="EBI-372557">
        <id>P84103</id>
    </interactant>
    <interactant intactId="EBI-10976394">
        <id>Q9BRL6-2</id>
        <label>SRSF8</label>
    </interactant>
    <organismsDiffer>false</organismsDiffer>
    <experiments>3</experiments>
</comment>
<comment type="interaction">
    <interactant intactId="EBI-372557">
        <id>P84103</id>
    </interactant>
    <interactant intactId="EBI-632461">
        <id>Q01081</id>
        <label>U2AF1</label>
    </interactant>
    <organismsDiffer>false</organismsDiffer>
    <experiments>5</experiments>
</comment>
<comment type="interaction">
    <interactant intactId="EBI-372557">
        <id>P84103</id>
    </interactant>
    <interactant intactId="EBI-11097439">
        <id>P26368-2</id>
        <label>U2AF2</label>
    </interactant>
    <organismsDiffer>false</organismsDiffer>
    <experiments>3</experiments>
</comment>
<comment type="interaction">
    <interactant intactId="EBI-372557">
        <id>P84103</id>
    </interactant>
    <interactant intactId="EBI-6452221">
        <id>Q9JKL7</id>
        <label>Srek1</label>
    </interactant>
    <organismsDiffer>true</organismsDiffer>
    <experiments>3</experiments>
</comment>
<comment type="subcellular location">
    <subcellularLocation>
        <location evidence="5">Nucleus</location>
    </subcellularLocation>
    <subcellularLocation>
        <location evidence="11">Nucleus speckle</location>
    </subcellularLocation>
    <subcellularLocation>
        <location evidence="5">Cytoplasm</location>
    </subcellularLocation>
    <text evidence="11">Recruited to nuclear speckles following interaction with YTHDC1.</text>
</comment>
<comment type="alternative products">
    <event type="alternative splicing"/>
    <isoform>
        <id>P84103-1</id>
        <name>1</name>
        <sequence type="displayed"/>
    </isoform>
    <isoform>
        <id>P84103-2</id>
        <name>2</name>
        <sequence type="described" ref="VSP_056243"/>
    </isoform>
</comment>
<comment type="PTM">
    <text evidence="1">Phosphorylated by CLK1, CLK2, CLK3 and CLK4. Extensively phosphorylated on serine residues in the RS domain.</text>
</comment>
<comment type="similarity">
    <text evidence="15">Belongs to the splicing factor SR family.</text>
</comment>
<comment type="online information" name="Atlas of Genetics and Cytogenetics in Oncology and Haematology">
    <link uri="https://atlasgeneticsoncology.org/gene/42279/SRSF3"/>
</comment>
<proteinExistence type="evidence at protein level"/>
<sequence length="164" mass="19330">MHRDSCPLDCKVYVGNLGNNGNKTELERAFGYYGPLRSVWVARNPPGFAFVEFEDPRDAADAVRELDGRTLCGCRVRVELSNGEKRSRNRGPPPSWGRRPRDDYRRRSPPPRRRSPRRRSFSRSRSRSLSRDRRRERSLSRERNHKPSRSFSRSRSRSRSNERK</sequence>
<dbReference type="EMBL" id="L10838">
    <property type="protein sequence ID" value="AAA36648.1"/>
    <property type="molecule type" value="mRNA"/>
</dbReference>
<dbReference type="EMBL" id="AF107405">
    <property type="protein sequence ID" value="AAD44523.1"/>
    <property type="molecule type" value="mRNA"/>
</dbReference>
<dbReference type="EMBL" id="AK304097">
    <property type="protein sequence ID" value="BAG65003.1"/>
    <property type="molecule type" value="mRNA"/>
</dbReference>
<dbReference type="EMBL" id="BT007017">
    <property type="protein sequence ID" value="AAP35663.1"/>
    <property type="molecule type" value="mRNA"/>
</dbReference>
<dbReference type="EMBL" id="Z85986">
    <property type="status" value="NOT_ANNOTATED_CDS"/>
    <property type="molecule type" value="Genomic_DNA"/>
</dbReference>
<dbReference type="EMBL" id="CH471081">
    <property type="protein sequence ID" value="EAX03898.1"/>
    <property type="molecule type" value="Genomic_DNA"/>
</dbReference>
<dbReference type="EMBL" id="BC000914">
    <property type="protein sequence ID" value="AAH00914.1"/>
    <property type="molecule type" value="mRNA"/>
</dbReference>
<dbReference type="EMBL" id="BC069018">
    <property type="protein sequence ID" value="AAH69018.1"/>
    <property type="molecule type" value="mRNA"/>
</dbReference>
<dbReference type="CCDS" id="CCDS4823.1">
    <molecule id="P84103-1"/>
</dbReference>
<dbReference type="PIR" id="I54089">
    <property type="entry name" value="I54089"/>
</dbReference>
<dbReference type="RefSeq" id="NP_003008.1">
    <molecule id="P84103-1"/>
    <property type="nucleotide sequence ID" value="NM_003017.5"/>
</dbReference>
<dbReference type="PDB" id="2I2Y">
    <property type="method" value="NMR"/>
    <property type="chains" value="A=1-86"/>
</dbReference>
<dbReference type="PDB" id="2I38">
    <property type="method" value="NMR"/>
    <property type="chains" value="A=1-86"/>
</dbReference>
<dbReference type="PDB" id="9ASQ">
    <property type="method" value="EM"/>
    <property type="resolution" value="3.00 A"/>
    <property type="chains" value="H=1-164"/>
</dbReference>
<dbReference type="PDBsum" id="2I2Y"/>
<dbReference type="PDBsum" id="2I38"/>
<dbReference type="PDBsum" id="9ASQ"/>
<dbReference type="EMDB" id="EMD-43823"/>
<dbReference type="SMR" id="P84103"/>
<dbReference type="BioGRID" id="112326">
    <property type="interactions" value="526"/>
</dbReference>
<dbReference type="CORUM" id="P84103"/>
<dbReference type="DIP" id="DIP-32961N"/>
<dbReference type="FunCoup" id="P84103">
    <property type="interactions" value="3213"/>
</dbReference>
<dbReference type="IntAct" id="P84103">
    <property type="interactions" value="293"/>
</dbReference>
<dbReference type="MINT" id="P84103"/>
<dbReference type="STRING" id="9606.ENSP00000362820"/>
<dbReference type="GlyGen" id="P84103">
    <property type="glycosylation" value="2 sites, 1 N-linked glycan (1 site), 1 O-linked glycan (1 site)"/>
</dbReference>
<dbReference type="iPTMnet" id="P84103"/>
<dbReference type="PhosphoSitePlus" id="P84103"/>
<dbReference type="SwissPalm" id="P84103"/>
<dbReference type="BioMuta" id="SRSF3"/>
<dbReference type="DMDM" id="51338672"/>
<dbReference type="jPOST" id="P84103"/>
<dbReference type="MassIVE" id="P84103"/>
<dbReference type="PaxDb" id="9606-ENSP00000362820"/>
<dbReference type="PeptideAtlas" id="P84103"/>
<dbReference type="PRIDE" id="P84103"/>
<dbReference type="ProteomicsDB" id="57753">
    <molecule id="P84103-1"/>
</dbReference>
<dbReference type="ProteomicsDB" id="5800"/>
<dbReference type="Pumba" id="P84103"/>
<dbReference type="TopDownProteomics" id="P84103-1">
    <molecule id="P84103-1"/>
</dbReference>
<dbReference type="Antibodypedia" id="29693">
    <property type="antibodies" value="282 antibodies from 31 providers"/>
</dbReference>
<dbReference type="DNASU" id="6428"/>
<dbReference type="Ensembl" id="ENST00000373715.11">
    <molecule id="P84103-1"/>
    <property type="protein sequence ID" value="ENSP00000362820.5"/>
    <property type="gene ID" value="ENSG00000112081.18"/>
</dbReference>
<dbReference type="Ensembl" id="ENST00000477442.6">
    <molecule id="P84103-2"/>
    <property type="protein sequence ID" value="ENSP00000436036.1"/>
    <property type="gene ID" value="ENSG00000112081.18"/>
</dbReference>
<dbReference type="Ensembl" id="ENST00000620941.2">
    <molecule id="P84103-1"/>
    <property type="protein sequence ID" value="ENSP00000482833.1"/>
    <property type="gene ID" value="ENSG00000112081.18"/>
</dbReference>
<dbReference type="GeneID" id="6428"/>
<dbReference type="KEGG" id="hsa:6428"/>
<dbReference type="MANE-Select" id="ENST00000373715.11">
    <property type="protein sequence ID" value="ENSP00000362820.5"/>
    <property type="RefSeq nucleotide sequence ID" value="NM_003017.5"/>
    <property type="RefSeq protein sequence ID" value="NP_003008.1"/>
</dbReference>
<dbReference type="UCSC" id="uc003omj.4">
    <molecule id="P84103-1"/>
    <property type="organism name" value="human"/>
</dbReference>
<dbReference type="AGR" id="HGNC:10785"/>
<dbReference type="CTD" id="6428"/>
<dbReference type="DisGeNET" id="6428"/>
<dbReference type="GeneCards" id="SRSF3"/>
<dbReference type="HGNC" id="HGNC:10785">
    <property type="gene designation" value="SRSF3"/>
</dbReference>
<dbReference type="HPA" id="ENSG00000112081">
    <property type="expression patterns" value="Low tissue specificity"/>
</dbReference>
<dbReference type="MIM" id="603364">
    <property type="type" value="gene"/>
</dbReference>
<dbReference type="neXtProt" id="NX_P84103"/>
<dbReference type="OpenTargets" id="ENSG00000112081"/>
<dbReference type="PharmGKB" id="PA35701"/>
<dbReference type="VEuPathDB" id="HostDB:ENSG00000112081"/>
<dbReference type="eggNOG" id="KOG0107">
    <property type="taxonomic scope" value="Eukaryota"/>
</dbReference>
<dbReference type="GeneTree" id="ENSGT00910000144115"/>
<dbReference type="HOGENOM" id="CLU_012062_20_2_1"/>
<dbReference type="InParanoid" id="P84103"/>
<dbReference type="OMA" id="EMHRDSC"/>
<dbReference type="OrthoDB" id="5970at2759"/>
<dbReference type="PAN-GO" id="P84103">
    <property type="GO annotations" value="3 GO annotations based on evolutionary models"/>
</dbReference>
<dbReference type="PhylomeDB" id="P84103"/>
<dbReference type="TreeFam" id="TF351858"/>
<dbReference type="PathwayCommons" id="P84103"/>
<dbReference type="Reactome" id="R-HSA-159236">
    <property type="pathway name" value="Transport of Mature mRNA derived from an Intron-Containing Transcript"/>
</dbReference>
<dbReference type="Reactome" id="R-HSA-72163">
    <property type="pathway name" value="mRNA Splicing - Major Pathway"/>
</dbReference>
<dbReference type="Reactome" id="R-HSA-72187">
    <property type="pathway name" value="mRNA 3'-end processing"/>
</dbReference>
<dbReference type="Reactome" id="R-HSA-72203">
    <property type="pathway name" value="Processing of Capped Intron-Containing Pre-mRNA"/>
</dbReference>
<dbReference type="Reactome" id="R-HSA-73856">
    <property type="pathway name" value="RNA Polymerase II Transcription Termination"/>
</dbReference>
<dbReference type="SignaLink" id="P84103"/>
<dbReference type="SIGNOR" id="P84103"/>
<dbReference type="BioGRID-ORCS" id="6428">
    <property type="hits" value="844 hits in 1161 CRISPR screens"/>
</dbReference>
<dbReference type="CD-CODE" id="232F8A39">
    <property type="entry name" value="P-body"/>
</dbReference>
<dbReference type="CD-CODE" id="804901D1">
    <property type="entry name" value="Nuclear speckle"/>
</dbReference>
<dbReference type="CD-CODE" id="91857CE7">
    <property type="entry name" value="Nucleolus"/>
</dbReference>
<dbReference type="CD-CODE" id="DEE660B4">
    <property type="entry name" value="Stress granule"/>
</dbReference>
<dbReference type="ChiTaRS" id="SRSF3">
    <property type="organism name" value="human"/>
</dbReference>
<dbReference type="EvolutionaryTrace" id="P84103"/>
<dbReference type="GeneWiki" id="SFRS3"/>
<dbReference type="GenomeRNAi" id="6428"/>
<dbReference type="Pharos" id="P84103">
    <property type="development level" value="Tbio"/>
</dbReference>
<dbReference type="PRO" id="PR:P84103"/>
<dbReference type="Proteomes" id="UP000005640">
    <property type="component" value="Chromosome 6"/>
</dbReference>
<dbReference type="RNAct" id="P84103">
    <property type="molecule type" value="protein"/>
</dbReference>
<dbReference type="Bgee" id="ENSG00000112081">
    <property type="expression patterns" value="Expressed in ventricular zone and 210 other cell types or tissues"/>
</dbReference>
<dbReference type="ExpressionAtlas" id="P84103">
    <property type="expression patterns" value="baseline and differential"/>
</dbReference>
<dbReference type="GO" id="GO:0005737">
    <property type="term" value="C:cytoplasm"/>
    <property type="evidence" value="ECO:0007669"/>
    <property type="project" value="UniProtKB-SubCell"/>
</dbReference>
<dbReference type="GO" id="GO:0016607">
    <property type="term" value="C:nuclear speck"/>
    <property type="evidence" value="ECO:0000314"/>
    <property type="project" value="UniProtKB"/>
</dbReference>
<dbReference type="GO" id="GO:0005654">
    <property type="term" value="C:nucleoplasm"/>
    <property type="evidence" value="ECO:0000304"/>
    <property type="project" value="Reactome"/>
</dbReference>
<dbReference type="GO" id="GO:0003729">
    <property type="term" value="F:mRNA binding"/>
    <property type="evidence" value="ECO:0000318"/>
    <property type="project" value="GO_Central"/>
</dbReference>
<dbReference type="GO" id="GO:0043274">
    <property type="term" value="F:phospholipase binding"/>
    <property type="evidence" value="ECO:0007669"/>
    <property type="project" value="Ensembl"/>
</dbReference>
<dbReference type="GO" id="GO:0070878">
    <property type="term" value="F:primary miRNA binding"/>
    <property type="evidence" value="ECO:0000315"/>
    <property type="project" value="ARUK-UCL"/>
</dbReference>
<dbReference type="GO" id="GO:0160134">
    <property type="term" value="F:protein-RNA sequence-specific adaptor activity"/>
    <property type="evidence" value="ECO:0000314"/>
    <property type="project" value="UniProtKB"/>
</dbReference>
<dbReference type="GO" id="GO:0003723">
    <property type="term" value="F:RNA binding"/>
    <property type="evidence" value="ECO:0000314"/>
    <property type="project" value="UniProtKB"/>
</dbReference>
<dbReference type="GO" id="GO:1990825">
    <property type="term" value="F:sequence-specific mRNA binding"/>
    <property type="evidence" value="ECO:0007669"/>
    <property type="project" value="Ensembl"/>
</dbReference>
<dbReference type="GO" id="GO:1990830">
    <property type="term" value="P:cellular response to leukemia inhibitory factor"/>
    <property type="evidence" value="ECO:0007669"/>
    <property type="project" value="Ensembl"/>
</dbReference>
<dbReference type="GO" id="GO:0045292">
    <property type="term" value="P:mRNA cis splicing, via spliceosome"/>
    <property type="evidence" value="ECO:0000318"/>
    <property type="project" value="GO_Central"/>
</dbReference>
<dbReference type="GO" id="GO:0006406">
    <property type="term" value="P:mRNA export from nucleus"/>
    <property type="evidence" value="ECO:0000314"/>
    <property type="project" value="UniProtKB"/>
</dbReference>
<dbReference type="GO" id="GO:0031053">
    <property type="term" value="P:primary miRNA processing"/>
    <property type="evidence" value="ECO:0000315"/>
    <property type="project" value="ARUK-UCL"/>
</dbReference>
<dbReference type="GO" id="GO:0048024">
    <property type="term" value="P:regulation of mRNA splicing, via spliceosome"/>
    <property type="evidence" value="ECO:0000314"/>
    <property type="project" value="UniProtKB"/>
</dbReference>
<dbReference type="CDD" id="cd12645">
    <property type="entry name" value="RRM_SRSF3"/>
    <property type="match status" value="1"/>
</dbReference>
<dbReference type="FunFam" id="3.30.70.330:FF:000352">
    <property type="entry name" value="Putative serine/arginine-rich splicing factor 3"/>
    <property type="match status" value="1"/>
</dbReference>
<dbReference type="Gene3D" id="3.30.70.330">
    <property type="match status" value="1"/>
</dbReference>
<dbReference type="IDEAL" id="IID00204"/>
<dbReference type="InterPro" id="IPR012677">
    <property type="entry name" value="Nucleotide-bd_a/b_plait_sf"/>
</dbReference>
<dbReference type="InterPro" id="IPR035979">
    <property type="entry name" value="RBD_domain_sf"/>
</dbReference>
<dbReference type="InterPro" id="IPR000504">
    <property type="entry name" value="RRM_dom"/>
</dbReference>
<dbReference type="InterPro" id="IPR050907">
    <property type="entry name" value="SRSF"/>
</dbReference>
<dbReference type="PANTHER" id="PTHR23147">
    <property type="entry name" value="SERINE/ARGININE RICH SPLICING FACTOR"/>
    <property type="match status" value="1"/>
</dbReference>
<dbReference type="Pfam" id="PF00076">
    <property type="entry name" value="RRM_1"/>
    <property type="match status" value="1"/>
</dbReference>
<dbReference type="SMART" id="SM00360">
    <property type="entry name" value="RRM"/>
    <property type="match status" value="1"/>
</dbReference>
<dbReference type="SUPFAM" id="SSF54928">
    <property type="entry name" value="RNA-binding domain, RBD"/>
    <property type="match status" value="1"/>
</dbReference>
<dbReference type="PROSITE" id="PS50102">
    <property type="entry name" value="RRM"/>
    <property type="match status" value="1"/>
</dbReference>
<evidence type="ECO:0000250" key="1">
    <source>
        <dbReference type="UniProtKB" id="P84104"/>
    </source>
</evidence>
<evidence type="ECO:0000255" key="2">
    <source>
        <dbReference type="PROSITE-ProRule" id="PRU00176"/>
    </source>
</evidence>
<evidence type="ECO:0000256" key="3">
    <source>
        <dbReference type="SAM" id="MobiDB-lite"/>
    </source>
</evidence>
<evidence type="ECO:0000269" key="4">
    <source>
    </source>
</evidence>
<evidence type="ECO:0000269" key="5">
    <source>
    </source>
</evidence>
<evidence type="ECO:0000269" key="6">
    <source>
    </source>
</evidence>
<evidence type="ECO:0000269" key="7">
    <source>
    </source>
</evidence>
<evidence type="ECO:0000269" key="8">
    <source>
    </source>
</evidence>
<evidence type="ECO:0000269" key="9">
    <source>
    </source>
</evidence>
<evidence type="ECO:0000269" key="10">
    <source>
    </source>
</evidence>
<evidence type="ECO:0000269" key="11">
    <source>
    </source>
</evidence>
<evidence type="ECO:0000269" key="12">
    <source>
    </source>
</evidence>
<evidence type="ECO:0000269" key="13">
    <source>
    </source>
</evidence>
<evidence type="ECO:0000303" key="14">
    <source>
    </source>
</evidence>
<evidence type="ECO:0000305" key="15"/>
<evidence type="ECO:0007744" key="16">
    <source>
    </source>
</evidence>
<evidence type="ECO:0007744" key="17">
    <source>
    </source>
</evidence>
<evidence type="ECO:0007744" key="18">
    <source>
    </source>
</evidence>
<evidence type="ECO:0007829" key="19">
    <source>
        <dbReference type="PDB" id="2I2Y"/>
    </source>
</evidence>
<evidence type="ECO:0007829" key="20">
    <source>
        <dbReference type="PDB" id="2I38"/>
    </source>
</evidence>
<evidence type="ECO:0007829" key="21">
    <source>
        <dbReference type="PDB" id="9ASQ"/>
    </source>
</evidence>
<keyword id="KW-0002">3D-structure</keyword>
<keyword id="KW-0007">Acetylation</keyword>
<keyword id="KW-0025">Alternative splicing</keyword>
<keyword id="KW-0963">Cytoplasm</keyword>
<keyword id="KW-0903">Direct protein sequencing</keyword>
<keyword id="KW-0507">mRNA processing</keyword>
<keyword id="KW-0508">mRNA splicing</keyword>
<keyword id="KW-0509">mRNA transport</keyword>
<keyword id="KW-0539">Nucleus</keyword>
<keyword id="KW-0597">Phosphoprotein</keyword>
<keyword id="KW-1267">Proteomics identification</keyword>
<keyword id="KW-1185">Reference proteome</keyword>
<keyword id="KW-0677">Repeat</keyword>
<keyword id="KW-0694">RNA-binding</keyword>
<keyword id="KW-0813">Transport</keyword>
<feature type="chain" id="PRO_0000081923" description="Serine/arginine-rich splicing factor 3">
    <location>
        <begin position="1"/>
        <end position="164"/>
    </location>
</feature>
<feature type="domain" description="RRM" evidence="2">
    <location>
        <begin position="10"/>
        <end position="83"/>
    </location>
</feature>
<feature type="repeat" description="B-1">
    <location>
        <begin position="119"/>
        <end position="133"/>
    </location>
</feature>
<feature type="repeat" description="B-2">
    <location>
        <begin position="149"/>
        <end position="164"/>
    </location>
</feature>
<feature type="region of interest" description="Sufficient for interaction with NXF1 and SRSP" evidence="6 9 13">
    <location>
        <begin position="1"/>
        <end position="90"/>
    </location>
</feature>
<feature type="region of interest" description="Disordered" evidence="3">
    <location>
        <begin position="81"/>
        <end position="164"/>
    </location>
</feature>
<feature type="region of interest" description="2 X approximate repeats, basic">
    <location>
        <begin position="119"/>
        <end position="164"/>
    </location>
</feature>
<feature type="compositionally biased region" description="Basic residues" evidence="3">
    <location>
        <begin position="107"/>
        <end position="128"/>
    </location>
</feature>
<feature type="compositionally biased region" description="Basic and acidic residues" evidence="3">
    <location>
        <begin position="129"/>
        <end position="142"/>
    </location>
</feature>
<feature type="compositionally biased region" description="Basic residues" evidence="3">
    <location>
        <begin position="143"/>
        <end position="158"/>
    </location>
</feature>
<feature type="modified residue" description="N-acetylmethionine" evidence="17">
    <location>
        <position position="1"/>
    </location>
</feature>
<feature type="modified residue" description="Phosphoserine" evidence="17 18">
    <location>
        <position position="5"/>
    </location>
</feature>
<feature type="modified residue" description="N6-acetyllysine" evidence="16">
    <location>
        <position position="23"/>
    </location>
</feature>
<feature type="splice variant" id="VSP_056243" description="In isoform 2." evidence="14">
    <original>SPRRRSFSRSRSRSLSRDRRRERSLSRERNHKPSRSFSRSRSRSRSNERK</original>
    <variation>VTIMSLLTTL</variation>
    <location>
        <begin position="115"/>
        <end position="164"/>
    </location>
</feature>
<feature type="mutagenesis site" description="Abolishes interaction with NXF1." evidence="9">
    <original>R</original>
    <variation>E</variation>
    <location>
        <position position="86"/>
    </location>
</feature>
<feature type="mutagenesis site" description="Abolishes interaction with NXF1." evidence="9">
    <original>R</original>
    <variation>E</variation>
    <location>
        <position position="88"/>
    </location>
</feature>
<feature type="mutagenesis site" description="Abolishes interaction with NXF1." evidence="9">
    <original>R</original>
    <variation>E</variation>
    <location>
        <position position="90"/>
    </location>
</feature>
<feature type="strand" evidence="19">
    <location>
        <begin position="3"/>
        <end position="6"/>
    </location>
</feature>
<feature type="strand" evidence="21">
    <location>
        <begin position="9"/>
        <end position="15"/>
    </location>
</feature>
<feature type="turn" evidence="20">
    <location>
        <begin position="18"/>
        <end position="20"/>
    </location>
</feature>
<feature type="helix" evidence="21">
    <location>
        <begin position="23"/>
        <end position="31"/>
    </location>
</feature>
<feature type="strand" evidence="21">
    <location>
        <begin position="36"/>
        <end position="41"/>
    </location>
</feature>
<feature type="strand" evidence="19">
    <location>
        <begin position="43"/>
        <end position="45"/>
    </location>
</feature>
<feature type="strand" evidence="21">
    <location>
        <begin position="49"/>
        <end position="55"/>
    </location>
</feature>
<feature type="helix" evidence="21">
    <location>
        <begin position="56"/>
        <end position="65"/>
    </location>
</feature>
<feature type="strand" evidence="21">
    <location>
        <begin position="66"/>
        <end position="68"/>
    </location>
</feature>
<feature type="strand" evidence="21">
    <location>
        <begin position="71"/>
        <end position="74"/>
    </location>
</feature>
<feature type="strand" evidence="21">
    <location>
        <begin position="77"/>
        <end position="80"/>
    </location>
</feature>
<name>SRSF3_HUMAN</name>